<protein>
    <recommendedName>
        <fullName evidence="1">LexA repressor</fullName>
        <ecNumber evidence="1">3.4.21.88</ecNumber>
    </recommendedName>
</protein>
<comment type="function">
    <text evidence="1">Represses a number of genes involved in the response to DNA damage (SOS response), including recA and lexA. In the presence of single-stranded DNA, RecA interacts with LexA causing an autocatalytic cleavage which disrupts the DNA-binding part of LexA, leading to derepression of the SOS regulon and eventually DNA repair.</text>
</comment>
<comment type="catalytic activity">
    <reaction evidence="1">
        <text>Hydrolysis of Ala-|-Gly bond in repressor LexA.</text>
        <dbReference type="EC" id="3.4.21.88"/>
    </reaction>
</comment>
<comment type="subunit">
    <text evidence="1">Homodimer.</text>
</comment>
<comment type="similarity">
    <text evidence="1">Belongs to the peptidase S24 family.</text>
</comment>
<name>LEXA_BURP6</name>
<feature type="chain" id="PRO_1000001272" description="LexA repressor">
    <location>
        <begin position="1"/>
        <end position="215"/>
    </location>
</feature>
<feature type="DNA-binding region" description="H-T-H motif" evidence="1">
    <location>
        <begin position="28"/>
        <end position="48"/>
    </location>
</feature>
<feature type="active site" description="For autocatalytic cleavage activity" evidence="1">
    <location>
        <position position="133"/>
    </location>
</feature>
<feature type="active site" description="For autocatalytic cleavage activity" evidence="1">
    <location>
        <position position="170"/>
    </location>
</feature>
<feature type="site" description="Cleavage; by autolysis" evidence="1">
    <location>
        <begin position="98"/>
        <end position="99"/>
    </location>
</feature>
<keyword id="KW-0068">Autocatalytic cleavage</keyword>
<keyword id="KW-0227">DNA damage</keyword>
<keyword id="KW-0234">DNA repair</keyword>
<keyword id="KW-0235">DNA replication</keyword>
<keyword id="KW-0238">DNA-binding</keyword>
<keyword id="KW-0378">Hydrolase</keyword>
<keyword id="KW-0678">Repressor</keyword>
<keyword id="KW-0742">SOS response</keyword>
<keyword id="KW-0804">Transcription</keyword>
<keyword id="KW-0805">Transcription regulation</keyword>
<reference key="1">
    <citation type="journal article" date="2010" name="Genome Biol. Evol.">
        <title>Continuing evolution of Burkholderia mallei through genome reduction and large-scale rearrangements.</title>
        <authorList>
            <person name="Losada L."/>
            <person name="Ronning C.M."/>
            <person name="DeShazer D."/>
            <person name="Woods D."/>
            <person name="Fedorova N."/>
            <person name="Kim H.S."/>
            <person name="Shabalina S.A."/>
            <person name="Pearson T.R."/>
            <person name="Brinkac L."/>
            <person name="Tan P."/>
            <person name="Nandi T."/>
            <person name="Crabtree J."/>
            <person name="Badger J."/>
            <person name="Beckstrom-Sternberg S."/>
            <person name="Saqib M."/>
            <person name="Schutzer S.E."/>
            <person name="Keim P."/>
            <person name="Nierman W.C."/>
        </authorList>
    </citation>
    <scope>NUCLEOTIDE SEQUENCE [LARGE SCALE GENOMIC DNA]</scope>
    <source>
        <strain>668</strain>
    </source>
</reference>
<sequence>MIKLTARQQQVFDLIRRAIERSGFPPTRAEIAAELGFSSPNAAEEHLRALARKGVIELAAGASRGIRLLGIDDAPHQLTLPHAALMQLSLPLVGRVAAGSPILAQEHISQHYACDPALFSSKPDYLLKVRGLSMRDAGILDGDLLAVQKRTEAKDGQIIVARLGDDVTVKRLKRRPGGVELIAENPDYENIFVKAGSAEFALEGIAVGLIRPGEF</sequence>
<evidence type="ECO:0000255" key="1">
    <source>
        <dbReference type="HAMAP-Rule" id="MF_00015"/>
    </source>
</evidence>
<proteinExistence type="inferred from homology"/>
<accession>A3N959</accession>
<dbReference type="EC" id="3.4.21.88" evidence="1"/>
<dbReference type="EMBL" id="CP000570">
    <property type="protein sequence ID" value="ABN83685.1"/>
    <property type="molecule type" value="Genomic_DNA"/>
</dbReference>
<dbReference type="RefSeq" id="WP_004191638.1">
    <property type="nucleotide sequence ID" value="NC_009074.1"/>
</dbReference>
<dbReference type="SMR" id="A3N959"/>
<dbReference type="MEROPS" id="S24.001"/>
<dbReference type="GeneID" id="93060159"/>
<dbReference type="KEGG" id="bpd:BURPS668_1845"/>
<dbReference type="HOGENOM" id="CLU_066192_45_3_4"/>
<dbReference type="GO" id="GO:0003677">
    <property type="term" value="F:DNA binding"/>
    <property type="evidence" value="ECO:0007669"/>
    <property type="project" value="UniProtKB-UniRule"/>
</dbReference>
<dbReference type="GO" id="GO:0004252">
    <property type="term" value="F:serine-type endopeptidase activity"/>
    <property type="evidence" value="ECO:0007669"/>
    <property type="project" value="UniProtKB-UniRule"/>
</dbReference>
<dbReference type="GO" id="GO:0006281">
    <property type="term" value="P:DNA repair"/>
    <property type="evidence" value="ECO:0007669"/>
    <property type="project" value="UniProtKB-UniRule"/>
</dbReference>
<dbReference type="GO" id="GO:0006260">
    <property type="term" value="P:DNA replication"/>
    <property type="evidence" value="ECO:0007669"/>
    <property type="project" value="UniProtKB-UniRule"/>
</dbReference>
<dbReference type="GO" id="GO:0045892">
    <property type="term" value="P:negative regulation of DNA-templated transcription"/>
    <property type="evidence" value="ECO:0007669"/>
    <property type="project" value="UniProtKB-UniRule"/>
</dbReference>
<dbReference type="GO" id="GO:0006508">
    <property type="term" value="P:proteolysis"/>
    <property type="evidence" value="ECO:0007669"/>
    <property type="project" value="InterPro"/>
</dbReference>
<dbReference type="GO" id="GO:0009432">
    <property type="term" value="P:SOS response"/>
    <property type="evidence" value="ECO:0007669"/>
    <property type="project" value="UniProtKB-UniRule"/>
</dbReference>
<dbReference type="CDD" id="cd06529">
    <property type="entry name" value="S24_LexA-like"/>
    <property type="match status" value="1"/>
</dbReference>
<dbReference type="FunFam" id="1.10.10.10:FF:000009">
    <property type="entry name" value="LexA repressor"/>
    <property type="match status" value="1"/>
</dbReference>
<dbReference type="FunFam" id="2.10.109.10:FF:000001">
    <property type="entry name" value="LexA repressor"/>
    <property type="match status" value="1"/>
</dbReference>
<dbReference type="Gene3D" id="2.10.109.10">
    <property type="entry name" value="Umud Fragment, subunit A"/>
    <property type="match status" value="1"/>
</dbReference>
<dbReference type="Gene3D" id="1.10.10.10">
    <property type="entry name" value="Winged helix-like DNA-binding domain superfamily/Winged helix DNA-binding domain"/>
    <property type="match status" value="1"/>
</dbReference>
<dbReference type="HAMAP" id="MF_00015">
    <property type="entry name" value="LexA"/>
    <property type="match status" value="1"/>
</dbReference>
<dbReference type="InterPro" id="IPR006200">
    <property type="entry name" value="LexA"/>
</dbReference>
<dbReference type="InterPro" id="IPR039418">
    <property type="entry name" value="LexA-like"/>
</dbReference>
<dbReference type="InterPro" id="IPR036286">
    <property type="entry name" value="LexA/Signal_pep-like_sf"/>
</dbReference>
<dbReference type="InterPro" id="IPR006199">
    <property type="entry name" value="LexA_DNA-bd_dom"/>
</dbReference>
<dbReference type="InterPro" id="IPR050077">
    <property type="entry name" value="LexA_repressor"/>
</dbReference>
<dbReference type="InterPro" id="IPR006197">
    <property type="entry name" value="Peptidase_S24_LexA"/>
</dbReference>
<dbReference type="InterPro" id="IPR015927">
    <property type="entry name" value="Peptidase_S24_S26A/B/C"/>
</dbReference>
<dbReference type="InterPro" id="IPR036388">
    <property type="entry name" value="WH-like_DNA-bd_sf"/>
</dbReference>
<dbReference type="InterPro" id="IPR036390">
    <property type="entry name" value="WH_DNA-bd_sf"/>
</dbReference>
<dbReference type="NCBIfam" id="TIGR00498">
    <property type="entry name" value="lexA"/>
    <property type="match status" value="1"/>
</dbReference>
<dbReference type="PANTHER" id="PTHR33516">
    <property type="entry name" value="LEXA REPRESSOR"/>
    <property type="match status" value="1"/>
</dbReference>
<dbReference type="PANTHER" id="PTHR33516:SF2">
    <property type="entry name" value="LEXA REPRESSOR-RELATED"/>
    <property type="match status" value="1"/>
</dbReference>
<dbReference type="Pfam" id="PF01726">
    <property type="entry name" value="LexA_DNA_bind"/>
    <property type="match status" value="1"/>
</dbReference>
<dbReference type="Pfam" id="PF00717">
    <property type="entry name" value="Peptidase_S24"/>
    <property type="match status" value="1"/>
</dbReference>
<dbReference type="PRINTS" id="PR00726">
    <property type="entry name" value="LEXASERPTASE"/>
</dbReference>
<dbReference type="SUPFAM" id="SSF51306">
    <property type="entry name" value="LexA/Signal peptidase"/>
    <property type="match status" value="1"/>
</dbReference>
<dbReference type="SUPFAM" id="SSF46785">
    <property type="entry name" value="Winged helix' DNA-binding domain"/>
    <property type="match status" value="1"/>
</dbReference>
<organism>
    <name type="scientific">Burkholderia pseudomallei (strain 668)</name>
    <dbReference type="NCBI Taxonomy" id="320373"/>
    <lineage>
        <taxon>Bacteria</taxon>
        <taxon>Pseudomonadati</taxon>
        <taxon>Pseudomonadota</taxon>
        <taxon>Betaproteobacteria</taxon>
        <taxon>Burkholderiales</taxon>
        <taxon>Burkholderiaceae</taxon>
        <taxon>Burkholderia</taxon>
        <taxon>pseudomallei group</taxon>
    </lineage>
</organism>
<gene>
    <name evidence="1" type="primary">lexA</name>
    <name type="ordered locus">BURPS668_1845</name>
</gene>